<gene>
    <name type="primary">XRCC3</name>
</gene>
<feature type="chain" id="PRO_0000287356" description="DNA repair protein XRCC3">
    <location>
        <begin position="1"/>
        <end position="341"/>
    </location>
</feature>
<feature type="binding site" evidence="3">
    <location>
        <begin position="107"/>
        <end position="114"/>
    </location>
    <ligand>
        <name>ATP</name>
        <dbReference type="ChEBI" id="CHEBI:30616"/>
    </ligand>
</feature>
<feature type="modified residue" description="N-acetylmethionine" evidence="2">
    <location>
        <position position="1"/>
    </location>
</feature>
<proteinExistence type="evidence at transcript level"/>
<protein>
    <recommendedName>
        <fullName>DNA repair protein XRCC3</fullName>
    </recommendedName>
    <alternativeName>
        <fullName>X-ray repair cross-complementing protein 3</fullName>
    </alternativeName>
</protein>
<reference key="1">
    <citation type="submission" date="2006-09" db="EMBL/GenBank/DDBJ databases">
        <authorList>
            <consortium name="NIH - Mammalian Gene Collection (MGC) project"/>
        </authorList>
    </citation>
    <scope>NUCLEOTIDE SEQUENCE [LARGE SCALE MRNA]</scope>
    <source>
        <strain>Hereford</strain>
        <tissue>Thalamus</tissue>
    </source>
</reference>
<name>XRCC3_BOVIN</name>
<comment type="function">
    <text evidence="1">Involved in the homologous recombination repair (HRR) pathway of double-stranded DNA, thought to repair chromosomal fragmentation, translocations and deletions. Part of the RAD21 paralog protein complex CX3 which acts in the BRCA1-BRCA2-dependent HR pathway. Upon DNA damage, CX3 acts downstream of RAD51 recruitment; the complex binds predominantly to the intersection of the four duplex arms of the Holliday junction (HJ) and to junctions of replication forks. Involved in HJ resolution and thus in processing HR intermediates late in the DNA repair process; the function may be linked to the CX3 complex and seems to involve GEN1 during mitotic cell cycle progression. Part of a PALB2-scaffolded HR complex containing BRCA2 and RAD51C and which is thought to play a role in DNA repair by HR. Plays a role in regulating mitochondrial DNA copy number under conditions of oxidative stress in the presence of RAD51 and RAD51C (By similarity).</text>
</comment>
<comment type="subunit">
    <text evidence="1">Interacts with RAD51C and RAD51. Part of the CX3 complex consisting of RAD51C and XRCC3; the complex has a ring-like structure arranged into a flat disc around a central channel; CX3 can interact with RAD51 in vitro. Forms a complex with FANCD2, BRCA2 and phosphorylated FANCG. Interacts with SWSAP1 and ZSWIM7; involved in homologous recombination repair. Interacts directly with PALB2 which may serve as a scaffold for a HR complex containing PALB2, BRCA2, RAD51C, RAD51 and XRCC3 (By similarity).</text>
</comment>
<comment type="subcellular location">
    <subcellularLocation>
        <location evidence="1">Nucleus</location>
    </subcellularLocation>
    <subcellularLocation>
        <location evidence="1">Cytoplasm</location>
    </subcellularLocation>
    <subcellularLocation>
        <location evidence="1">Cytoplasm</location>
        <location evidence="1">Perinuclear region</location>
    </subcellularLocation>
    <subcellularLocation>
        <location evidence="1">Mitochondrion matrix</location>
    </subcellularLocation>
    <text evidence="1">Accumulates in discrete nuclear foci prior to DNA damage, and these foci persist throughout the time course of DNA repair.</text>
</comment>
<comment type="similarity">
    <text evidence="4">Belongs to the RecA family. RAD51 subfamily.</text>
</comment>
<evidence type="ECO:0000250" key="1"/>
<evidence type="ECO:0000250" key="2">
    <source>
        <dbReference type="UniProtKB" id="O43542"/>
    </source>
</evidence>
<evidence type="ECO:0000255" key="3"/>
<evidence type="ECO:0000305" key="4"/>
<keyword id="KW-0007">Acetylation</keyword>
<keyword id="KW-0067">ATP-binding</keyword>
<keyword id="KW-0963">Cytoplasm</keyword>
<keyword id="KW-0227">DNA damage</keyword>
<keyword id="KW-0233">DNA recombination</keyword>
<keyword id="KW-0234">DNA repair</keyword>
<keyword id="KW-0238">DNA-binding</keyword>
<keyword id="KW-0496">Mitochondrion</keyword>
<keyword id="KW-0547">Nucleotide-binding</keyword>
<keyword id="KW-0539">Nucleus</keyword>
<keyword id="KW-1185">Reference proteome</keyword>
<organism>
    <name type="scientific">Bos taurus</name>
    <name type="common">Bovine</name>
    <dbReference type="NCBI Taxonomy" id="9913"/>
    <lineage>
        <taxon>Eukaryota</taxon>
        <taxon>Metazoa</taxon>
        <taxon>Chordata</taxon>
        <taxon>Craniata</taxon>
        <taxon>Vertebrata</taxon>
        <taxon>Euteleostomi</taxon>
        <taxon>Mammalia</taxon>
        <taxon>Eutheria</taxon>
        <taxon>Laurasiatheria</taxon>
        <taxon>Artiodactyla</taxon>
        <taxon>Ruminantia</taxon>
        <taxon>Pecora</taxon>
        <taxon>Bovidae</taxon>
        <taxon>Bovinae</taxon>
        <taxon>Bos</taxon>
    </lineage>
</organism>
<accession>Q08DH8</accession>
<sequence>MDLDRLDLNPRIVAAVKKAKLRSVKEVLHLSGPDLQRRTHLSSPDVQLLLRASASLLRGHGVCTALHLLRQEGPFPEQHQRLSLGCPVLDALLRGGLPLDGITELAGRSSAGKTQLALQLCLAVQLPPRHGGLGAGAVYVCTEDAFPSRRLQQLIAQQQRLRADVPGHVISKIRFGHQIFIEHAADVDTLLQCVREKVPVLLARGMARLVVIDSVAAPFRCEFDGAALALRAQRLLALGAELRRLSCAFRSPVLCVNQVTEAVEEQDLVAGPPGMSPALGITWANQLLVRLLADRQRPEEAPLTPPGRTLRVVFAPHLPASSCSYTIAAEGVRGMPGTACS</sequence>
<dbReference type="EMBL" id="BC123742">
    <property type="protein sequence ID" value="AAI23743.1"/>
    <property type="molecule type" value="mRNA"/>
</dbReference>
<dbReference type="RefSeq" id="NP_001071585.1">
    <property type="nucleotide sequence ID" value="NM_001078117.1"/>
</dbReference>
<dbReference type="RefSeq" id="XP_010815579.1">
    <property type="nucleotide sequence ID" value="XM_010817277.4"/>
</dbReference>
<dbReference type="RefSeq" id="XP_010815580.1">
    <property type="nucleotide sequence ID" value="XM_010817278.4"/>
</dbReference>
<dbReference type="RefSeq" id="XP_024837733.1">
    <property type="nucleotide sequence ID" value="XM_024981965.2"/>
</dbReference>
<dbReference type="RefSeq" id="XP_024837734.1">
    <property type="nucleotide sequence ID" value="XM_024981966.2"/>
</dbReference>
<dbReference type="SMR" id="Q08DH8"/>
<dbReference type="FunCoup" id="Q08DH8">
    <property type="interactions" value="1004"/>
</dbReference>
<dbReference type="STRING" id="9913.ENSBTAP00000013145"/>
<dbReference type="PaxDb" id="9913-ENSBTAP00000013145"/>
<dbReference type="GeneID" id="768244"/>
<dbReference type="KEGG" id="bta:768244"/>
<dbReference type="CTD" id="7517"/>
<dbReference type="eggNOG" id="KOG1564">
    <property type="taxonomic scope" value="Eukaryota"/>
</dbReference>
<dbReference type="HOGENOM" id="CLU_041732_1_0_1"/>
<dbReference type="InParanoid" id="Q08DH8"/>
<dbReference type="OrthoDB" id="1861185at2759"/>
<dbReference type="TreeFam" id="TF101203"/>
<dbReference type="Proteomes" id="UP000009136">
    <property type="component" value="Unplaced"/>
</dbReference>
<dbReference type="GO" id="GO:0005737">
    <property type="term" value="C:cytoplasm"/>
    <property type="evidence" value="ECO:0000250"/>
    <property type="project" value="UniProtKB"/>
</dbReference>
<dbReference type="GO" id="GO:0005759">
    <property type="term" value="C:mitochondrial matrix"/>
    <property type="evidence" value="ECO:0007669"/>
    <property type="project" value="UniProtKB-SubCell"/>
</dbReference>
<dbReference type="GO" id="GO:0005634">
    <property type="term" value="C:nucleus"/>
    <property type="evidence" value="ECO:0000250"/>
    <property type="project" value="UniProtKB"/>
</dbReference>
<dbReference type="GO" id="GO:0048471">
    <property type="term" value="C:perinuclear region of cytoplasm"/>
    <property type="evidence" value="ECO:0000250"/>
    <property type="project" value="UniProtKB"/>
</dbReference>
<dbReference type="GO" id="GO:0033065">
    <property type="term" value="C:Rad51C-XRCC3 complex"/>
    <property type="evidence" value="ECO:0000250"/>
    <property type="project" value="UniProtKB"/>
</dbReference>
<dbReference type="GO" id="GO:0005657">
    <property type="term" value="C:replication fork"/>
    <property type="evidence" value="ECO:0000250"/>
    <property type="project" value="UniProtKB"/>
</dbReference>
<dbReference type="GO" id="GO:0005524">
    <property type="term" value="F:ATP binding"/>
    <property type="evidence" value="ECO:0007669"/>
    <property type="project" value="UniProtKB-KW"/>
</dbReference>
<dbReference type="GO" id="GO:0140664">
    <property type="term" value="F:ATP-dependent DNA damage sensor activity"/>
    <property type="evidence" value="ECO:0007669"/>
    <property type="project" value="InterPro"/>
</dbReference>
<dbReference type="GO" id="GO:0003677">
    <property type="term" value="F:DNA binding"/>
    <property type="evidence" value="ECO:0007669"/>
    <property type="project" value="UniProtKB-KW"/>
</dbReference>
<dbReference type="GO" id="GO:0000724">
    <property type="term" value="P:double-strand break repair via homologous recombination"/>
    <property type="evidence" value="ECO:0000250"/>
    <property type="project" value="UniProtKB"/>
</dbReference>
<dbReference type="GO" id="GO:0045003">
    <property type="term" value="P:double-strand break repair via synthesis-dependent strand annealing"/>
    <property type="evidence" value="ECO:0000318"/>
    <property type="project" value="GO_Central"/>
</dbReference>
<dbReference type="GO" id="GO:0090267">
    <property type="term" value="P:positive regulation of mitotic cell cycle spindle assembly checkpoint"/>
    <property type="evidence" value="ECO:0000250"/>
    <property type="project" value="UniProtKB"/>
</dbReference>
<dbReference type="GO" id="GO:0010824">
    <property type="term" value="P:regulation of centrosome duplication"/>
    <property type="evidence" value="ECO:0000250"/>
    <property type="project" value="UniProtKB"/>
</dbReference>
<dbReference type="GO" id="GO:0071140">
    <property type="term" value="P:resolution of mitotic recombination intermediates"/>
    <property type="evidence" value="ECO:0000250"/>
    <property type="project" value="UniProtKB"/>
</dbReference>
<dbReference type="GO" id="GO:0090656">
    <property type="term" value="P:t-circle formation"/>
    <property type="evidence" value="ECO:0000318"/>
    <property type="project" value="GO_Central"/>
</dbReference>
<dbReference type="GO" id="GO:0000722">
    <property type="term" value="P:telomere maintenance via recombination"/>
    <property type="evidence" value="ECO:0000318"/>
    <property type="project" value="GO_Central"/>
</dbReference>
<dbReference type="CDD" id="cd19491">
    <property type="entry name" value="XRCC3"/>
    <property type="match status" value="1"/>
</dbReference>
<dbReference type="FunFam" id="3.40.50.300:FF:001223">
    <property type="entry name" value="X-ray repair cross complementing 3"/>
    <property type="match status" value="1"/>
</dbReference>
<dbReference type="Gene3D" id="3.40.50.300">
    <property type="entry name" value="P-loop containing nucleotide triphosphate hydrolases"/>
    <property type="match status" value="1"/>
</dbReference>
<dbReference type="InterPro" id="IPR013632">
    <property type="entry name" value="DNA_recomb/repair_Rad51_C"/>
</dbReference>
<dbReference type="InterPro" id="IPR016467">
    <property type="entry name" value="DNA_recomb/repair_RecA-like"/>
</dbReference>
<dbReference type="InterPro" id="IPR027417">
    <property type="entry name" value="P-loop_NTPase"/>
</dbReference>
<dbReference type="InterPro" id="IPR020588">
    <property type="entry name" value="RecA_ATP-bd"/>
</dbReference>
<dbReference type="InterPro" id="IPR047348">
    <property type="entry name" value="XRCC3-like_C"/>
</dbReference>
<dbReference type="PANTHER" id="PTHR46487">
    <property type="entry name" value="DNA REPAIR PROTEIN XRCC3"/>
    <property type="match status" value="1"/>
</dbReference>
<dbReference type="PANTHER" id="PTHR46487:SF1">
    <property type="entry name" value="DNA REPAIR PROTEIN XRCC3"/>
    <property type="match status" value="1"/>
</dbReference>
<dbReference type="Pfam" id="PF08423">
    <property type="entry name" value="Rad51"/>
    <property type="match status" value="1"/>
</dbReference>
<dbReference type="PIRSF" id="PIRSF005856">
    <property type="entry name" value="Rad51"/>
    <property type="match status" value="1"/>
</dbReference>
<dbReference type="SUPFAM" id="SSF52540">
    <property type="entry name" value="P-loop containing nucleoside triphosphate hydrolases"/>
    <property type="match status" value="1"/>
</dbReference>
<dbReference type="PROSITE" id="PS50162">
    <property type="entry name" value="RECA_2"/>
    <property type="match status" value="1"/>
</dbReference>